<accession>Q5X0U5</accession>
<name>UBID_LEGPA</name>
<keyword id="KW-1003">Cell membrane</keyword>
<keyword id="KW-0210">Decarboxylase</keyword>
<keyword id="KW-0285">Flavoprotein</keyword>
<keyword id="KW-0288">FMN</keyword>
<keyword id="KW-0456">Lyase</keyword>
<keyword id="KW-0464">Manganese</keyword>
<keyword id="KW-0472">Membrane</keyword>
<keyword id="KW-0479">Metal-binding</keyword>
<keyword id="KW-0831">Ubiquinone biosynthesis</keyword>
<dbReference type="EC" id="4.1.1.98" evidence="1"/>
<dbReference type="EMBL" id="CR628336">
    <property type="protein sequence ID" value="CAH14154.1"/>
    <property type="molecule type" value="Genomic_DNA"/>
</dbReference>
<dbReference type="RefSeq" id="WP_014844969.1">
    <property type="nucleotide sequence ID" value="NC_006368.1"/>
</dbReference>
<dbReference type="SMR" id="Q5X0U5"/>
<dbReference type="KEGG" id="lpp:lpp3001"/>
<dbReference type="LegioList" id="lpp3001"/>
<dbReference type="HOGENOM" id="CLU_023348_4_1_6"/>
<dbReference type="UniPathway" id="UPA00232"/>
<dbReference type="GO" id="GO:0005829">
    <property type="term" value="C:cytosol"/>
    <property type="evidence" value="ECO:0007669"/>
    <property type="project" value="TreeGrafter"/>
</dbReference>
<dbReference type="GO" id="GO:0005886">
    <property type="term" value="C:plasma membrane"/>
    <property type="evidence" value="ECO:0007669"/>
    <property type="project" value="UniProtKB-SubCell"/>
</dbReference>
<dbReference type="GO" id="GO:0008694">
    <property type="term" value="F:3-octaprenyl-4-hydroxybenzoate carboxy-lyase activity"/>
    <property type="evidence" value="ECO:0007669"/>
    <property type="project" value="UniProtKB-UniRule"/>
</dbReference>
<dbReference type="GO" id="GO:0046872">
    <property type="term" value="F:metal ion binding"/>
    <property type="evidence" value="ECO:0007669"/>
    <property type="project" value="UniProtKB-KW"/>
</dbReference>
<dbReference type="GO" id="GO:0006744">
    <property type="term" value="P:ubiquinone biosynthetic process"/>
    <property type="evidence" value="ECO:0007669"/>
    <property type="project" value="UniProtKB-UniRule"/>
</dbReference>
<dbReference type="FunFam" id="3.40.1670.10:FF:000001">
    <property type="entry name" value="3-octaprenyl-4-hydroxybenzoate carboxy-lyase"/>
    <property type="match status" value="1"/>
</dbReference>
<dbReference type="Gene3D" id="1.20.5.570">
    <property type="entry name" value="Single helix bin"/>
    <property type="match status" value="1"/>
</dbReference>
<dbReference type="Gene3D" id="3.40.1670.10">
    <property type="entry name" value="UbiD C-terminal domain-like"/>
    <property type="match status" value="1"/>
</dbReference>
<dbReference type="HAMAP" id="MF_01636">
    <property type="entry name" value="UbiD"/>
    <property type="match status" value="1"/>
</dbReference>
<dbReference type="InterPro" id="IPR002830">
    <property type="entry name" value="UbiD"/>
</dbReference>
<dbReference type="InterPro" id="IPR049381">
    <property type="entry name" value="UbiD-like_C"/>
</dbReference>
<dbReference type="InterPro" id="IPR049383">
    <property type="entry name" value="UbiD-like_N"/>
</dbReference>
<dbReference type="InterPro" id="IPR023677">
    <property type="entry name" value="UbiD_bacteria"/>
</dbReference>
<dbReference type="InterPro" id="IPR048304">
    <property type="entry name" value="UbiD_Rift_dom"/>
</dbReference>
<dbReference type="NCBIfam" id="NF008175">
    <property type="entry name" value="PRK10922.1"/>
    <property type="match status" value="1"/>
</dbReference>
<dbReference type="NCBIfam" id="TIGR00148">
    <property type="entry name" value="UbiD family decarboxylase"/>
    <property type="match status" value="1"/>
</dbReference>
<dbReference type="PANTHER" id="PTHR30108">
    <property type="entry name" value="3-OCTAPRENYL-4-HYDROXYBENZOATE CARBOXY-LYASE-RELATED"/>
    <property type="match status" value="1"/>
</dbReference>
<dbReference type="PANTHER" id="PTHR30108:SF17">
    <property type="entry name" value="FERULIC ACID DECARBOXYLASE 1"/>
    <property type="match status" value="1"/>
</dbReference>
<dbReference type="Pfam" id="PF01977">
    <property type="entry name" value="UbiD"/>
    <property type="match status" value="1"/>
</dbReference>
<dbReference type="Pfam" id="PF20696">
    <property type="entry name" value="UbiD_C"/>
    <property type="match status" value="1"/>
</dbReference>
<dbReference type="Pfam" id="PF20695">
    <property type="entry name" value="UbiD_N"/>
    <property type="match status" value="1"/>
</dbReference>
<dbReference type="SUPFAM" id="SSF50475">
    <property type="entry name" value="FMN-binding split barrel"/>
    <property type="match status" value="1"/>
</dbReference>
<dbReference type="SUPFAM" id="SSF143968">
    <property type="entry name" value="UbiD C-terminal domain-like"/>
    <property type="match status" value="1"/>
</dbReference>
<comment type="function">
    <text evidence="1">Catalyzes the decarboxylation of 3-octaprenyl-4-hydroxy benzoate to 2-octaprenylphenol, an intermediate step in ubiquinone biosynthesis.</text>
</comment>
<comment type="catalytic activity">
    <reaction evidence="1">
        <text>a 4-hydroxy-3-(all-trans-polyprenyl)benzoate + H(+) = a 2-(all-trans-polyprenyl)phenol + CO2</text>
        <dbReference type="Rhea" id="RHEA:41680"/>
        <dbReference type="Rhea" id="RHEA-COMP:9514"/>
        <dbReference type="Rhea" id="RHEA-COMP:9516"/>
        <dbReference type="ChEBI" id="CHEBI:1269"/>
        <dbReference type="ChEBI" id="CHEBI:15378"/>
        <dbReference type="ChEBI" id="CHEBI:16526"/>
        <dbReference type="ChEBI" id="CHEBI:78396"/>
        <dbReference type="EC" id="4.1.1.98"/>
    </reaction>
</comment>
<comment type="cofactor">
    <cofactor evidence="1">
        <name>prenylated FMN</name>
        <dbReference type="ChEBI" id="CHEBI:87746"/>
    </cofactor>
    <text evidence="1">Binds 1 prenylated FMN per subunit.</text>
</comment>
<comment type="cofactor">
    <cofactor evidence="1">
        <name>Mn(2+)</name>
        <dbReference type="ChEBI" id="CHEBI:29035"/>
    </cofactor>
</comment>
<comment type="pathway">
    <text evidence="1">Cofactor biosynthesis; ubiquinone biosynthesis.</text>
</comment>
<comment type="subunit">
    <text evidence="1">Homohexamer.</text>
</comment>
<comment type="subcellular location">
    <subcellularLocation>
        <location evidence="1">Cell membrane</location>
        <topology evidence="1">Peripheral membrane protein</topology>
    </subcellularLocation>
</comment>
<comment type="similarity">
    <text evidence="1">Belongs to the UbiD family.</text>
</comment>
<organism>
    <name type="scientific">Legionella pneumophila (strain Paris)</name>
    <dbReference type="NCBI Taxonomy" id="297246"/>
    <lineage>
        <taxon>Bacteria</taxon>
        <taxon>Pseudomonadati</taxon>
        <taxon>Pseudomonadota</taxon>
        <taxon>Gammaproteobacteria</taxon>
        <taxon>Legionellales</taxon>
        <taxon>Legionellaceae</taxon>
        <taxon>Legionella</taxon>
    </lineage>
</organism>
<protein>
    <recommendedName>
        <fullName evidence="1">3-octaprenyl-4-hydroxybenzoate carboxy-lyase</fullName>
        <ecNumber evidence="1">4.1.1.98</ecNumber>
    </recommendedName>
    <alternativeName>
        <fullName evidence="1">Polyprenyl p-hydroxybenzoate decarboxylase</fullName>
    </alternativeName>
</protein>
<proteinExistence type="inferred from homology"/>
<feature type="chain" id="PRO_0000267670" description="3-octaprenyl-4-hydroxybenzoate carboxy-lyase">
    <location>
        <begin position="1"/>
        <end position="488"/>
    </location>
</feature>
<feature type="active site" description="Proton donor" evidence="1">
    <location>
        <position position="287"/>
    </location>
</feature>
<feature type="binding site" evidence="1">
    <location>
        <position position="172"/>
    </location>
    <ligand>
        <name>Mn(2+)</name>
        <dbReference type="ChEBI" id="CHEBI:29035"/>
    </ligand>
</feature>
<feature type="binding site" evidence="1">
    <location>
        <begin position="175"/>
        <end position="177"/>
    </location>
    <ligand>
        <name>prenylated FMN</name>
        <dbReference type="ChEBI" id="CHEBI:87746"/>
    </ligand>
</feature>
<feature type="binding site" evidence="1">
    <location>
        <begin position="189"/>
        <end position="191"/>
    </location>
    <ligand>
        <name>prenylated FMN</name>
        <dbReference type="ChEBI" id="CHEBI:87746"/>
    </ligand>
</feature>
<feature type="binding site" evidence="1">
    <location>
        <begin position="194"/>
        <end position="195"/>
    </location>
    <ligand>
        <name>prenylated FMN</name>
        <dbReference type="ChEBI" id="CHEBI:87746"/>
    </ligand>
</feature>
<feature type="binding site" evidence="1">
    <location>
        <position position="238"/>
    </location>
    <ligand>
        <name>Mn(2+)</name>
        <dbReference type="ChEBI" id="CHEBI:29035"/>
    </ligand>
</feature>
<sequence>MKYSDLRDFIAQLESRELLKRIDYPVSPHLEMTVVSDKVLRSGGPALLFTNTPNYNMPVLTNLFGTVERVALGMGEESIVALREIGKLLAALKEPDPPKGFKDAFSKLPLLKQALNMAPKYVSGAECQTHVWEKDEVDLTLLPIQTCWPGDVAPLITWGLVTTRGPHQSRENMGIYRQQLLSKNKLIMRWLSHRGGALDYQAWQQEYPQERFPVAVTLGADPATILAAVTPVPDTLSEYAFAGLLRGQRTRLTRCIGNDLHVPASAEIVLEGYLEPGNEAPEGPYGDHTGYYNEVQSFPVFTVERITHRDKPIYHSTYTGRPPDEPAILGVALNEVFIPLLQKQFPEIVDFYLPPEGCSYRLAVVTIKKQYPGHAKRIMMAVWSFLRQFMYTKFVIVCDDDVDARNWQDVIWAMTTRMDPSRDTVMVENTPIDYLDFASPVSGLGSKMGMDATSKWPGETQREWGKPITMDEDVLNRVNSYWSLLGLK</sequence>
<gene>
    <name evidence="1" type="primary">ubiD</name>
    <name type="ordered locus">lpp3001</name>
</gene>
<reference key="1">
    <citation type="journal article" date="2004" name="Nat. Genet.">
        <title>Evidence in the Legionella pneumophila genome for exploitation of host cell functions and high genome plasticity.</title>
        <authorList>
            <person name="Cazalet C."/>
            <person name="Rusniok C."/>
            <person name="Brueggemann H."/>
            <person name="Zidane N."/>
            <person name="Magnier A."/>
            <person name="Ma L."/>
            <person name="Tichit M."/>
            <person name="Jarraud S."/>
            <person name="Bouchier C."/>
            <person name="Vandenesch F."/>
            <person name="Kunst F."/>
            <person name="Etienne J."/>
            <person name="Glaser P."/>
            <person name="Buchrieser C."/>
        </authorList>
    </citation>
    <scope>NUCLEOTIDE SEQUENCE [LARGE SCALE GENOMIC DNA]</scope>
    <source>
        <strain>Paris</strain>
    </source>
</reference>
<evidence type="ECO:0000255" key="1">
    <source>
        <dbReference type="HAMAP-Rule" id="MF_01636"/>
    </source>
</evidence>